<dbReference type="EMBL" id="AE017244">
    <property type="protein sequence ID" value="AAZ53550.2"/>
    <property type="molecule type" value="Genomic_DNA"/>
</dbReference>
<dbReference type="RefSeq" id="WP_044272353.1">
    <property type="nucleotide sequence ID" value="NC_007332.1"/>
</dbReference>
<dbReference type="SMR" id="Q4A8I9"/>
<dbReference type="KEGG" id="mhp:MHP7448_0176"/>
<dbReference type="HOGENOM" id="CLU_055188_4_1_14"/>
<dbReference type="Proteomes" id="UP000000553">
    <property type="component" value="Chromosome"/>
</dbReference>
<dbReference type="GO" id="GO:0022625">
    <property type="term" value="C:cytosolic large ribosomal subunit"/>
    <property type="evidence" value="ECO:0007669"/>
    <property type="project" value="TreeGrafter"/>
</dbReference>
<dbReference type="GO" id="GO:0019843">
    <property type="term" value="F:rRNA binding"/>
    <property type="evidence" value="ECO:0007669"/>
    <property type="project" value="UniProtKB-UniRule"/>
</dbReference>
<dbReference type="GO" id="GO:0003735">
    <property type="term" value="F:structural constituent of ribosome"/>
    <property type="evidence" value="ECO:0007669"/>
    <property type="project" value="InterPro"/>
</dbReference>
<dbReference type="GO" id="GO:0006412">
    <property type="term" value="P:translation"/>
    <property type="evidence" value="ECO:0007669"/>
    <property type="project" value="UniProtKB-UniRule"/>
</dbReference>
<dbReference type="Gene3D" id="3.100.10.10">
    <property type="match status" value="1"/>
</dbReference>
<dbReference type="HAMAP" id="MF_01341">
    <property type="entry name" value="Ribosomal_uL15"/>
    <property type="match status" value="1"/>
</dbReference>
<dbReference type="InterPro" id="IPR030878">
    <property type="entry name" value="Ribosomal_uL15"/>
</dbReference>
<dbReference type="InterPro" id="IPR021131">
    <property type="entry name" value="Ribosomal_uL15/eL18"/>
</dbReference>
<dbReference type="InterPro" id="IPR036227">
    <property type="entry name" value="Ribosomal_uL15/eL18_sf"/>
</dbReference>
<dbReference type="InterPro" id="IPR005749">
    <property type="entry name" value="Ribosomal_uL15_bac-type"/>
</dbReference>
<dbReference type="InterPro" id="IPR001196">
    <property type="entry name" value="Ribosomal_uL15_CS"/>
</dbReference>
<dbReference type="NCBIfam" id="TIGR01071">
    <property type="entry name" value="rplO_bact"/>
    <property type="match status" value="1"/>
</dbReference>
<dbReference type="PANTHER" id="PTHR12934">
    <property type="entry name" value="50S RIBOSOMAL PROTEIN L15"/>
    <property type="match status" value="1"/>
</dbReference>
<dbReference type="PANTHER" id="PTHR12934:SF11">
    <property type="entry name" value="LARGE RIBOSOMAL SUBUNIT PROTEIN UL15M"/>
    <property type="match status" value="1"/>
</dbReference>
<dbReference type="Pfam" id="PF00828">
    <property type="entry name" value="Ribosomal_L27A"/>
    <property type="match status" value="1"/>
</dbReference>
<dbReference type="SUPFAM" id="SSF52080">
    <property type="entry name" value="Ribosomal proteins L15p and L18e"/>
    <property type="match status" value="1"/>
</dbReference>
<dbReference type="PROSITE" id="PS00475">
    <property type="entry name" value="RIBOSOMAL_L15"/>
    <property type="match status" value="1"/>
</dbReference>
<name>RL15_MESH7</name>
<sequence length="147" mass="16727">MSIRLENLSYTPGARKEKHRKGRGHAAGKGKQAGRGQSGQKKRSTVRLGFEGGQNPWFRRVPKRGFRNFNKKEYEIFNLSDLESRYQYGDTVSLESLYLKKVLKKRNLKAKLLAKGDLTKKLTVTTNAFSIAAQKKIEEKGGKIEVR</sequence>
<evidence type="ECO:0000255" key="1">
    <source>
        <dbReference type="HAMAP-Rule" id="MF_01341"/>
    </source>
</evidence>
<evidence type="ECO:0000256" key="2">
    <source>
        <dbReference type="SAM" id="MobiDB-lite"/>
    </source>
</evidence>
<evidence type="ECO:0000305" key="3"/>
<organism>
    <name type="scientific">Mesomycoplasma hyopneumoniae (strain 7448)</name>
    <name type="common">Mycoplasma hyopneumoniae</name>
    <dbReference type="NCBI Taxonomy" id="262722"/>
    <lineage>
        <taxon>Bacteria</taxon>
        <taxon>Bacillati</taxon>
        <taxon>Mycoplasmatota</taxon>
        <taxon>Mycoplasmoidales</taxon>
        <taxon>Metamycoplasmataceae</taxon>
        <taxon>Mesomycoplasma</taxon>
    </lineage>
</organism>
<gene>
    <name evidence="1" type="primary">rplO</name>
    <name type="ordered locus">MHP7448_0176</name>
</gene>
<keyword id="KW-0687">Ribonucleoprotein</keyword>
<keyword id="KW-0689">Ribosomal protein</keyword>
<keyword id="KW-0694">RNA-binding</keyword>
<keyword id="KW-0699">rRNA-binding</keyword>
<comment type="function">
    <text evidence="1">Binds to the 23S rRNA.</text>
</comment>
<comment type="subunit">
    <text evidence="1">Part of the 50S ribosomal subunit.</text>
</comment>
<comment type="similarity">
    <text evidence="1">Belongs to the universal ribosomal protein uL15 family.</text>
</comment>
<proteinExistence type="inferred from homology"/>
<feature type="chain" id="PRO_0000104760" description="Large ribosomal subunit protein uL15">
    <location>
        <begin position="1"/>
        <end position="147"/>
    </location>
</feature>
<feature type="region of interest" description="Disordered" evidence="2">
    <location>
        <begin position="1"/>
        <end position="46"/>
    </location>
</feature>
<feature type="compositionally biased region" description="Basic residues" evidence="2">
    <location>
        <begin position="16"/>
        <end position="28"/>
    </location>
</feature>
<accession>Q4A8I9</accession>
<protein>
    <recommendedName>
        <fullName evidence="1">Large ribosomal subunit protein uL15</fullName>
    </recommendedName>
    <alternativeName>
        <fullName evidence="3">50S ribosomal protein L15</fullName>
    </alternativeName>
</protein>
<reference key="1">
    <citation type="journal article" date="2005" name="J. Bacteriol.">
        <title>Swine and poultry pathogens: the complete genome sequences of two strains of Mycoplasma hyopneumoniae and a strain of Mycoplasma synoviae.</title>
        <authorList>
            <person name="Vasconcelos A.T.R."/>
            <person name="Ferreira H.B."/>
            <person name="Bizarro C.V."/>
            <person name="Bonatto S.L."/>
            <person name="Carvalho M.O."/>
            <person name="Pinto P.M."/>
            <person name="Almeida D.F."/>
            <person name="Almeida L.G.P."/>
            <person name="Almeida R."/>
            <person name="Alves-Junior L."/>
            <person name="Assuncao E.N."/>
            <person name="Azevedo V.A.C."/>
            <person name="Bogo M.R."/>
            <person name="Brigido M.M."/>
            <person name="Brocchi M."/>
            <person name="Burity H.A."/>
            <person name="Camargo A.A."/>
            <person name="Camargo S.S."/>
            <person name="Carepo M.S."/>
            <person name="Carraro D.M."/>
            <person name="de Mattos Cascardo J.C."/>
            <person name="Castro L.A."/>
            <person name="Cavalcanti G."/>
            <person name="Chemale G."/>
            <person name="Collevatti R.G."/>
            <person name="Cunha C.W."/>
            <person name="Dallagiovanna B."/>
            <person name="Dambros B.P."/>
            <person name="Dellagostin O.A."/>
            <person name="Falcao C."/>
            <person name="Fantinatti-Garboggini F."/>
            <person name="Felipe M.S.S."/>
            <person name="Fiorentin L."/>
            <person name="Franco G.R."/>
            <person name="Freitas N.S.A."/>
            <person name="Frias D."/>
            <person name="Grangeiro T.B."/>
            <person name="Grisard E.C."/>
            <person name="Guimaraes C.T."/>
            <person name="Hungria M."/>
            <person name="Jardim S.N."/>
            <person name="Krieger M.A."/>
            <person name="Laurino J.P."/>
            <person name="Lima L.F.A."/>
            <person name="Lopes M.I."/>
            <person name="Loreto E.L.S."/>
            <person name="Madeira H.M.F."/>
            <person name="Manfio G.P."/>
            <person name="Maranhao A.Q."/>
            <person name="Martinkovics C.T."/>
            <person name="Medeiros S.R.B."/>
            <person name="Moreira M.A.M."/>
            <person name="Neiva M."/>
            <person name="Ramalho-Neto C.E."/>
            <person name="Nicolas M.F."/>
            <person name="Oliveira S.C."/>
            <person name="Paixao R.F.C."/>
            <person name="Pedrosa F.O."/>
            <person name="Pena S.D.J."/>
            <person name="Pereira M."/>
            <person name="Pereira-Ferrari L."/>
            <person name="Piffer I."/>
            <person name="Pinto L.S."/>
            <person name="Potrich D.P."/>
            <person name="Salim A.C.M."/>
            <person name="Santos F.R."/>
            <person name="Schmitt R."/>
            <person name="Schneider M.P.C."/>
            <person name="Schrank A."/>
            <person name="Schrank I.S."/>
            <person name="Schuck A.F."/>
            <person name="Seuanez H.N."/>
            <person name="Silva D.W."/>
            <person name="Silva R."/>
            <person name="Silva S.C."/>
            <person name="Soares C.M.A."/>
            <person name="Souza K.R.L."/>
            <person name="Souza R.C."/>
            <person name="Staats C.C."/>
            <person name="Steffens M.B.R."/>
            <person name="Teixeira S.M.R."/>
            <person name="Urmenyi T.P."/>
            <person name="Vainstein M.H."/>
            <person name="Zuccherato L.W."/>
            <person name="Simpson A.J.G."/>
            <person name="Zaha A."/>
        </authorList>
    </citation>
    <scope>NUCLEOTIDE SEQUENCE [LARGE SCALE GENOMIC DNA]</scope>
    <source>
        <strain>7448</strain>
    </source>
</reference>